<dbReference type="EMBL" id="AE005174">
    <property type="protein sequence ID" value="AAG58472.1"/>
    <property type="molecule type" value="Genomic_DNA"/>
</dbReference>
<dbReference type="EMBL" id="BA000007">
    <property type="protein sequence ID" value="BAB37638.1"/>
    <property type="molecule type" value="Genomic_DNA"/>
</dbReference>
<dbReference type="PIR" id="D86001">
    <property type="entry name" value="D86001"/>
</dbReference>
<dbReference type="PIR" id="G91155">
    <property type="entry name" value="G91155"/>
</dbReference>
<dbReference type="RefSeq" id="NP_312242.1">
    <property type="nucleotide sequence ID" value="NC_002695.1"/>
</dbReference>
<dbReference type="RefSeq" id="WP_000185243.1">
    <property type="nucleotide sequence ID" value="NZ_VOAI01000004.1"/>
</dbReference>
<dbReference type="SMR" id="Q8X4S4"/>
<dbReference type="STRING" id="155864.Z4725"/>
<dbReference type="GeneID" id="75173522"/>
<dbReference type="GeneID" id="915929"/>
<dbReference type="KEGG" id="ece:Z4725"/>
<dbReference type="KEGG" id="ecs:ECs_4215"/>
<dbReference type="PATRIC" id="fig|386585.9.peg.4400"/>
<dbReference type="eggNOG" id="COG0738">
    <property type="taxonomic scope" value="Bacteria"/>
</dbReference>
<dbReference type="HOGENOM" id="CLU_056916_0_0_6"/>
<dbReference type="OMA" id="FIVTGPI"/>
<dbReference type="Proteomes" id="UP000000558">
    <property type="component" value="Chromosome"/>
</dbReference>
<dbReference type="Proteomes" id="UP000002519">
    <property type="component" value="Chromosome"/>
</dbReference>
<dbReference type="GO" id="GO:0005886">
    <property type="term" value="C:plasma membrane"/>
    <property type="evidence" value="ECO:0007669"/>
    <property type="project" value="UniProtKB-SubCell"/>
</dbReference>
<dbReference type="GO" id="GO:0022857">
    <property type="term" value="F:transmembrane transporter activity"/>
    <property type="evidence" value="ECO:0007669"/>
    <property type="project" value="InterPro"/>
</dbReference>
<dbReference type="CDD" id="cd17333">
    <property type="entry name" value="MFS_FucP_MFSD4_like"/>
    <property type="match status" value="1"/>
</dbReference>
<dbReference type="FunFam" id="1.20.1250.20:FF:000032">
    <property type="entry name" value="Protein TsgA"/>
    <property type="match status" value="1"/>
</dbReference>
<dbReference type="FunFam" id="1.20.1250.20:FF:000052">
    <property type="entry name" value="Protein TsgA"/>
    <property type="match status" value="1"/>
</dbReference>
<dbReference type="Gene3D" id="1.20.1250.20">
    <property type="entry name" value="MFS general substrate transporter like domains"/>
    <property type="match status" value="2"/>
</dbReference>
<dbReference type="HAMAP" id="MF_01044">
    <property type="entry name" value="MFS_TsgA"/>
    <property type="match status" value="1"/>
</dbReference>
<dbReference type="InterPro" id="IPR011701">
    <property type="entry name" value="MFS"/>
</dbReference>
<dbReference type="InterPro" id="IPR020846">
    <property type="entry name" value="MFS_dom"/>
</dbReference>
<dbReference type="InterPro" id="IPR036259">
    <property type="entry name" value="MFS_trans_sf"/>
</dbReference>
<dbReference type="InterPro" id="IPR023528">
    <property type="entry name" value="MFS_TsgA"/>
</dbReference>
<dbReference type="InterPro" id="IPR050375">
    <property type="entry name" value="MFS_TsgA-like"/>
</dbReference>
<dbReference type="NCBIfam" id="NF002982">
    <property type="entry name" value="PRK03699.1"/>
    <property type="match status" value="1"/>
</dbReference>
<dbReference type="PANTHER" id="PTHR43702">
    <property type="entry name" value="L-FUCOSE-PROTON SYMPORTER"/>
    <property type="match status" value="1"/>
</dbReference>
<dbReference type="PANTHER" id="PTHR43702:SF3">
    <property type="entry name" value="PROTEIN TSGA"/>
    <property type="match status" value="1"/>
</dbReference>
<dbReference type="Pfam" id="PF07690">
    <property type="entry name" value="MFS_1"/>
    <property type="match status" value="1"/>
</dbReference>
<dbReference type="SUPFAM" id="SSF103473">
    <property type="entry name" value="MFS general substrate transporter"/>
    <property type="match status" value="1"/>
</dbReference>
<dbReference type="PROSITE" id="PS50850">
    <property type="entry name" value="MFS"/>
    <property type="match status" value="1"/>
</dbReference>
<gene>
    <name type="primary">tsgA</name>
    <name type="ordered locus">Z4725</name>
    <name type="ordered locus">ECs4215</name>
</gene>
<feature type="chain" id="PRO_0000206496" description="Protein TsgA">
    <location>
        <begin position="1"/>
        <end position="393"/>
    </location>
</feature>
<feature type="topological domain" description="Cytoplasmic" evidence="2">
    <location>
        <begin position="1"/>
        <end position="10"/>
    </location>
</feature>
<feature type="transmembrane region" description="Helical" evidence="2">
    <location>
        <begin position="11"/>
        <end position="31"/>
    </location>
</feature>
<feature type="topological domain" description="Periplasmic" evidence="2">
    <location>
        <begin position="32"/>
        <end position="50"/>
    </location>
</feature>
<feature type="transmembrane region" description="Helical" evidence="2">
    <location>
        <begin position="51"/>
        <end position="71"/>
    </location>
</feature>
<feature type="topological domain" description="Cytoplasmic" evidence="2">
    <location>
        <begin position="72"/>
        <end position="77"/>
    </location>
</feature>
<feature type="transmembrane region" description="Helical" evidence="2">
    <location>
        <begin position="78"/>
        <end position="98"/>
    </location>
</feature>
<feature type="topological domain" description="Periplasmic" evidence="2">
    <location>
        <begin position="99"/>
        <end position="100"/>
    </location>
</feature>
<feature type="transmembrane region" description="Helical" evidence="2">
    <location>
        <begin position="101"/>
        <end position="121"/>
    </location>
</feature>
<feature type="topological domain" description="Cytoplasmic" evidence="2">
    <location>
        <begin position="122"/>
        <end position="133"/>
    </location>
</feature>
<feature type="transmembrane region" description="Helical" evidence="2">
    <location>
        <begin position="134"/>
        <end position="154"/>
    </location>
</feature>
<feature type="topological domain" description="Periplasmic" evidence="2">
    <location>
        <begin position="155"/>
        <end position="161"/>
    </location>
</feature>
<feature type="transmembrane region" description="Helical" evidence="2">
    <location>
        <begin position="162"/>
        <end position="182"/>
    </location>
</feature>
<feature type="topological domain" description="Cytoplasmic" evidence="2">
    <location>
        <begin position="183"/>
        <end position="205"/>
    </location>
</feature>
<feature type="transmembrane region" description="Helical" evidence="2">
    <location>
        <begin position="206"/>
        <end position="226"/>
    </location>
</feature>
<feature type="topological domain" description="Periplasmic" evidence="2">
    <location>
        <begin position="227"/>
        <end position="244"/>
    </location>
</feature>
<feature type="transmembrane region" description="Helical" evidence="2">
    <location>
        <begin position="245"/>
        <end position="265"/>
    </location>
</feature>
<feature type="topological domain" description="Cytoplasmic" evidence="2">
    <location>
        <begin position="266"/>
        <end position="272"/>
    </location>
</feature>
<feature type="transmembrane region" description="Helical" evidence="2">
    <location>
        <begin position="273"/>
        <end position="293"/>
    </location>
</feature>
<feature type="topological domain" description="Periplasmic" evidence="2">
    <location>
        <begin position="294"/>
        <end position="296"/>
    </location>
</feature>
<feature type="transmembrane region" description="Helical" evidence="2">
    <location>
        <begin position="297"/>
        <end position="317"/>
    </location>
</feature>
<feature type="topological domain" description="Cytoplasmic" evidence="2">
    <location>
        <begin position="318"/>
        <end position="331"/>
    </location>
</feature>
<feature type="transmembrane region" description="Helical" evidence="2">
    <location>
        <begin position="332"/>
        <end position="352"/>
    </location>
</feature>
<feature type="topological domain" description="Periplasmic" evidence="2">
    <location>
        <begin position="353"/>
        <end position="360"/>
    </location>
</feature>
<feature type="transmembrane region" description="Helical" evidence="2">
    <location>
        <begin position="361"/>
        <end position="381"/>
    </location>
</feature>
<feature type="topological domain" description="Cytoplasmic" evidence="2">
    <location>
        <begin position="382"/>
        <end position="393"/>
    </location>
</feature>
<organism>
    <name type="scientific">Escherichia coli O157:H7</name>
    <dbReference type="NCBI Taxonomy" id="83334"/>
    <lineage>
        <taxon>Bacteria</taxon>
        <taxon>Pseudomonadati</taxon>
        <taxon>Pseudomonadota</taxon>
        <taxon>Gammaproteobacteria</taxon>
        <taxon>Enterobacterales</taxon>
        <taxon>Enterobacteriaceae</taxon>
        <taxon>Escherichia</taxon>
    </lineage>
</organism>
<protein>
    <recommendedName>
        <fullName>Protein TsgA</fullName>
    </recommendedName>
</protein>
<sequence length="393" mass="43108">MTNSNRIKLTWISFLSYALTGALVIVTGMVMGNIADYFNLPVSSMSNTFTFLNAGILISIFLNAWLMEIVPLKTQLRFGFLLMVLAVAGLMFSHSLALFSAAMFILGVVSGITMSIGTFLVTQMYEGRQRGSRLLFTDSFFSMAGMIFPMIAAFLLARSIEWYWVYACIGLVYVAIFILTFGCEFPALGKHAPKTDAPVAKEKWGIGVLFLSVAALCYILGQLGFISWVPEYAKGLGMSLNDAGTLVSNFWMSYMVGMWAFSFILRFFDLQRILTVLAGLAAILMYVFNTGTPAHMAWSILALGFFSSAIYTTIITLGSQQTKVPSPKLVNFVLTCGTIGTMLTFVVTGPIVEHSGPQAALLTANGLYAVVFVMCFLLGFVSRHRQHNTLTSH</sequence>
<accession>Q8X4S4</accession>
<keyword id="KW-0997">Cell inner membrane</keyword>
<keyword id="KW-1003">Cell membrane</keyword>
<keyword id="KW-0472">Membrane</keyword>
<keyword id="KW-1185">Reference proteome</keyword>
<keyword id="KW-0812">Transmembrane</keyword>
<keyword id="KW-1133">Transmembrane helix</keyword>
<reference key="1">
    <citation type="journal article" date="2001" name="Nature">
        <title>Genome sequence of enterohaemorrhagic Escherichia coli O157:H7.</title>
        <authorList>
            <person name="Perna N.T."/>
            <person name="Plunkett G. III"/>
            <person name="Burland V."/>
            <person name="Mau B."/>
            <person name="Glasner J.D."/>
            <person name="Rose D.J."/>
            <person name="Mayhew G.F."/>
            <person name="Evans P.S."/>
            <person name="Gregor J."/>
            <person name="Kirkpatrick H.A."/>
            <person name="Posfai G."/>
            <person name="Hackett J."/>
            <person name="Klink S."/>
            <person name="Boutin A."/>
            <person name="Shao Y."/>
            <person name="Miller L."/>
            <person name="Grotbeck E.J."/>
            <person name="Davis N.W."/>
            <person name="Lim A."/>
            <person name="Dimalanta E.T."/>
            <person name="Potamousis K."/>
            <person name="Apodaca J."/>
            <person name="Anantharaman T.S."/>
            <person name="Lin J."/>
            <person name="Yen G."/>
            <person name="Schwartz D.C."/>
            <person name="Welch R.A."/>
            <person name="Blattner F.R."/>
        </authorList>
    </citation>
    <scope>NUCLEOTIDE SEQUENCE [LARGE SCALE GENOMIC DNA]</scope>
    <source>
        <strain>O157:H7 / EDL933 / ATCC 700927 / EHEC</strain>
    </source>
</reference>
<reference key="2">
    <citation type="journal article" date="2001" name="DNA Res.">
        <title>Complete genome sequence of enterohemorrhagic Escherichia coli O157:H7 and genomic comparison with a laboratory strain K-12.</title>
        <authorList>
            <person name="Hayashi T."/>
            <person name="Makino K."/>
            <person name="Ohnishi M."/>
            <person name="Kurokawa K."/>
            <person name="Ishii K."/>
            <person name="Yokoyama K."/>
            <person name="Han C.-G."/>
            <person name="Ohtsubo E."/>
            <person name="Nakayama K."/>
            <person name="Murata T."/>
            <person name="Tanaka M."/>
            <person name="Tobe T."/>
            <person name="Iida T."/>
            <person name="Takami H."/>
            <person name="Honda T."/>
            <person name="Sasakawa C."/>
            <person name="Ogasawara N."/>
            <person name="Yasunaga T."/>
            <person name="Kuhara S."/>
            <person name="Shiba T."/>
            <person name="Hattori M."/>
            <person name="Shinagawa H."/>
        </authorList>
    </citation>
    <scope>NUCLEOTIDE SEQUENCE [LARGE SCALE GENOMIC DNA]</scope>
    <source>
        <strain>O157:H7 / Sakai / RIMD 0509952 / EHEC</strain>
    </source>
</reference>
<name>TSGA_ECO57</name>
<evidence type="ECO:0000250" key="1"/>
<evidence type="ECO:0000255" key="2"/>
<evidence type="ECO:0000305" key="3"/>
<proteinExistence type="inferred from homology"/>
<comment type="subcellular location">
    <subcellularLocation>
        <location evidence="1">Cell inner membrane</location>
        <topology evidence="1">Multi-pass membrane protein</topology>
    </subcellularLocation>
</comment>
<comment type="similarity">
    <text evidence="3">Belongs to the major facilitator superfamily. TsgA family.</text>
</comment>